<reference key="1">
    <citation type="journal article" date="1995" name="Science">
        <title>Whole-genome random sequencing and assembly of Haemophilus influenzae Rd.</title>
        <authorList>
            <person name="Fleischmann R.D."/>
            <person name="Adams M.D."/>
            <person name="White O."/>
            <person name="Clayton R.A."/>
            <person name="Kirkness E.F."/>
            <person name="Kerlavage A.R."/>
            <person name="Bult C.J."/>
            <person name="Tomb J.-F."/>
            <person name="Dougherty B.A."/>
            <person name="Merrick J.M."/>
            <person name="McKenney K."/>
            <person name="Sutton G.G."/>
            <person name="FitzHugh W."/>
            <person name="Fields C.A."/>
            <person name="Gocayne J.D."/>
            <person name="Scott J.D."/>
            <person name="Shirley R."/>
            <person name="Liu L.-I."/>
            <person name="Glodek A."/>
            <person name="Kelley J.M."/>
            <person name="Weidman J.F."/>
            <person name="Phillips C.A."/>
            <person name="Spriggs T."/>
            <person name="Hedblom E."/>
            <person name="Cotton M.D."/>
            <person name="Utterback T.R."/>
            <person name="Hanna M.C."/>
            <person name="Nguyen D.T."/>
            <person name="Saudek D.M."/>
            <person name="Brandon R.C."/>
            <person name="Fine L.D."/>
            <person name="Fritchman J.L."/>
            <person name="Fuhrmann J.L."/>
            <person name="Geoghagen N.S.M."/>
            <person name="Gnehm C.L."/>
            <person name="McDonald L.A."/>
            <person name="Small K.V."/>
            <person name="Fraser C.M."/>
            <person name="Smith H.O."/>
            <person name="Venter J.C."/>
        </authorList>
    </citation>
    <scope>NUCLEOTIDE SEQUENCE [LARGE SCALE GENOMIC DNA]</scope>
    <source>
        <strain>ATCC 51907 / DSM 11121 / KW20 / Rd</strain>
    </source>
</reference>
<name>Y152_HAEIN</name>
<evidence type="ECO:0000250" key="1"/>
<evidence type="ECO:0000305" key="2"/>
<protein>
    <recommendedName>
        <fullName>Putative 4'-phosphopantetheinyl transferase HI_0152</fullName>
        <ecNumber>2.7.8.-</ecNumber>
    </recommendedName>
</protein>
<feature type="chain" id="PRO_0000206085" description="Putative 4'-phosphopantetheinyl transferase HI_0152">
    <location>
        <begin position="1"/>
        <end position="235"/>
    </location>
</feature>
<feature type="binding site" evidence="1">
    <location>
        <position position="112"/>
    </location>
    <ligand>
        <name>Mg(2+)</name>
        <dbReference type="ChEBI" id="CHEBI:18420"/>
    </ligand>
</feature>
<feature type="binding site" evidence="1">
    <location>
        <position position="114"/>
    </location>
    <ligand>
        <name>Mg(2+)</name>
        <dbReference type="ChEBI" id="CHEBI:18420"/>
    </ligand>
</feature>
<feature type="binding site" evidence="1">
    <location>
        <position position="155"/>
    </location>
    <ligand>
        <name>Mg(2+)</name>
        <dbReference type="ChEBI" id="CHEBI:18420"/>
    </ligand>
</feature>
<keyword id="KW-0460">Magnesium</keyword>
<keyword id="KW-0479">Metal-binding</keyword>
<keyword id="KW-1185">Reference proteome</keyword>
<keyword id="KW-0808">Transferase</keyword>
<accession>P43954</accession>
<sequence length="235" mass="27808">MTTYIAYGNINQPFSLESLPDELIPENLYQIETDSSRVFQRHQCRRLAHLLLFQLLKIAGKSTALLSQIHRTESGRPYFLDERIDFNISHSGDWVAVILDIRNEEKSAVGIDIEFPKIRNFTALMEHIAPKEEIDWFHHQQDSLNAFYRCWCLREAVLKSQGFGIVKLSNVRHFPEQQKIFSDYCPQGQLWFTDELPIYLAAFVNHQEKLPHFYEWNRESLQIKELEKYVLYEVN</sequence>
<gene>
    <name type="ordered locus">HI_0152</name>
</gene>
<dbReference type="EC" id="2.7.8.-"/>
<dbReference type="EMBL" id="L42023">
    <property type="protein sequence ID" value="AAC21831.1"/>
    <property type="molecule type" value="Genomic_DNA"/>
</dbReference>
<dbReference type="PIR" id="H64002">
    <property type="entry name" value="H64002"/>
</dbReference>
<dbReference type="RefSeq" id="NP_438322.1">
    <property type="nucleotide sequence ID" value="NC_000907.1"/>
</dbReference>
<dbReference type="SMR" id="P43954"/>
<dbReference type="STRING" id="71421.HI_0152"/>
<dbReference type="DNASU" id="951063"/>
<dbReference type="EnsemblBacteria" id="AAC21831">
    <property type="protein sequence ID" value="AAC21831"/>
    <property type="gene ID" value="HI_0152"/>
</dbReference>
<dbReference type="KEGG" id="hin:HI_0152"/>
<dbReference type="PATRIC" id="fig|71421.8.peg.155"/>
<dbReference type="eggNOG" id="COG2091">
    <property type="taxonomic scope" value="Bacteria"/>
</dbReference>
<dbReference type="HOGENOM" id="CLU_102894_0_0_6"/>
<dbReference type="OrthoDB" id="9808281at2"/>
<dbReference type="BioCyc" id="HINF71421:G1GJ1-164-MONOMER"/>
<dbReference type="Proteomes" id="UP000000579">
    <property type="component" value="Chromosome"/>
</dbReference>
<dbReference type="GO" id="GO:0005829">
    <property type="term" value="C:cytosol"/>
    <property type="evidence" value="ECO:0000318"/>
    <property type="project" value="GO_Central"/>
</dbReference>
<dbReference type="GO" id="GO:0008897">
    <property type="term" value="F:holo-[acyl-carrier-protein] synthase activity"/>
    <property type="evidence" value="ECO:0000318"/>
    <property type="project" value="GO_Central"/>
</dbReference>
<dbReference type="GO" id="GO:0000287">
    <property type="term" value="F:magnesium ion binding"/>
    <property type="evidence" value="ECO:0007669"/>
    <property type="project" value="InterPro"/>
</dbReference>
<dbReference type="GO" id="GO:0019878">
    <property type="term" value="P:lysine biosynthetic process via aminoadipic acid"/>
    <property type="evidence" value="ECO:0000318"/>
    <property type="project" value="GO_Central"/>
</dbReference>
<dbReference type="Gene3D" id="3.90.470.20">
    <property type="entry name" value="4'-phosphopantetheinyl transferase domain"/>
    <property type="match status" value="1"/>
</dbReference>
<dbReference type="InterPro" id="IPR008278">
    <property type="entry name" value="4-PPantetheinyl_Trfase_dom"/>
</dbReference>
<dbReference type="InterPro" id="IPR037143">
    <property type="entry name" value="4-PPantetheinyl_Trfase_dom_sf"/>
</dbReference>
<dbReference type="InterPro" id="IPR050559">
    <property type="entry name" value="P-Pant_transferase_sf"/>
</dbReference>
<dbReference type="PANTHER" id="PTHR12215:SF10">
    <property type="entry name" value="L-AMINOADIPATE-SEMIALDEHYDE DEHYDROGENASE-PHOSPHOPANTETHEINYL TRANSFERASE"/>
    <property type="match status" value="1"/>
</dbReference>
<dbReference type="PANTHER" id="PTHR12215">
    <property type="entry name" value="PHOSPHOPANTETHEINE TRANSFERASE"/>
    <property type="match status" value="1"/>
</dbReference>
<dbReference type="Pfam" id="PF01648">
    <property type="entry name" value="ACPS"/>
    <property type="match status" value="1"/>
</dbReference>
<dbReference type="SUPFAM" id="SSF56214">
    <property type="entry name" value="4'-phosphopantetheinyl transferase"/>
    <property type="match status" value="2"/>
</dbReference>
<proteinExistence type="inferred from homology"/>
<comment type="function">
    <text evidence="1">May transfer the 4'-phosphopantetheine moiety from coenzyme A (CoA) to a serine residue of a carrier protein domain.</text>
</comment>
<comment type="cofactor">
    <cofactor evidence="1">
        <name>Mg(2+)</name>
        <dbReference type="ChEBI" id="CHEBI:18420"/>
    </cofactor>
</comment>
<comment type="similarity">
    <text evidence="2">Belongs to the P-Pant transferase superfamily. Gsp/Sfp/HetI/AcpT family.</text>
</comment>
<organism>
    <name type="scientific">Haemophilus influenzae (strain ATCC 51907 / DSM 11121 / KW20 / Rd)</name>
    <dbReference type="NCBI Taxonomy" id="71421"/>
    <lineage>
        <taxon>Bacteria</taxon>
        <taxon>Pseudomonadati</taxon>
        <taxon>Pseudomonadota</taxon>
        <taxon>Gammaproteobacteria</taxon>
        <taxon>Pasteurellales</taxon>
        <taxon>Pasteurellaceae</taxon>
        <taxon>Haemophilus</taxon>
    </lineage>
</organism>